<evidence type="ECO:0000250" key="1"/>
<evidence type="ECO:0000269" key="2">
    <source>
    </source>
</evidence>
<evidence type="ECO:0000305" key="3"/>
<evidence type="ECO:0007829" key="4">
    <source>
        <dbReference type="PDB" id="5HDI"/>
    </source>
</evidence>
<name>CP144_MYCTU</name>
<gene>
    <name type="primary">cyp144</name>
    <name type="ordered locus">Rv1777</name>
    <name type="ORF">MTCY25C11.04</name>
</gene>
<keyword id="KW-0002">3D-structure</keyword>
<keyword id="KW-0349">Heme</keyword>
<keyword id="KW-0408">Iron</keyword>
<keyword id="KW-0479">Metal-binding</keyword>
<keyword id="KW-0503">Monooxygenase</keyword>
<keyword id="KW-0560">Oxidoreductase</keyword>
<keyword id="KW-1185">Reference proteome</keyword>
<accession>P9WPL1</accession>
<accession>L0TAD0</accession>
<accession>O33180</accession>
<proteinExistence type="evidence at protein level"/>
<feature type="chain" id="PRO_0000052307" description="Cytochrome P450 144">
    <location>
        <begin position="1"/>
        <end position="434"/>
    </location>
</feature>
<feature type="binding site" evidence="1">
    <location>
        <position position="124"/>
    </location>
    <ligand>
        <name>substrate</name>
    </ligand>
</feature>
<feature type="binding site" evidence="1">
    <location>
        <position position="128"/>
    </location>
    <ligand>
        <name>substrate</name>
    </ligand>
</feature>
<feature type="binding site" evidence="1">
    <location>
        <position position="132"/>
    </location>
    <ligand>
        <name>heme</name>
        <dbReference type="ChEBI" id="CHEBI:30413"/>
    </ligand>
</feature>
<feature type="binding site" evidence="1">
    <location>
        <position position="326"/>
    </location>
    <ligand>
        <name>heme</name>
        <dbReference type="ChEBI" id="CHEBI:30413"/>
    </ligand>
</feature>
<feature type="binding site" evidence="1">
    <location>
        <position position="383"/>
    </location>
    <ligand>
        <name>heme</name>
        <dbReference type="ChEBI" id="CHEBI:30413"/>
    </ligand>
</feature>
<feature type="binding site" description="axial binding residue" evidence="1">
    <location>
        <position position="385"/>
    </location>
    <ligand>
        <name>heme</name>
        <dbReference type="ChEBI" id="CHEBI:30413"/>
    </ligand>
    <ligandPart>
        <name>Fe</name>
        <dbReference type="ChEBI" id="CHEBI:18248"/>
    </ligandPart>
</feature>
<feature type="helix" evidence="4">
    <location>
        <begin position="43"/>
        <end position="47"/>
    </location>
</feature>
<feature type="helix" evidence="4">
    <location>
        <begin position="50"/>
        <end position="59"/>
    </location>
</feature>
<feature type="strand" evidence="4">
    <location>
        <begin position="61"/>
        <end position="64"/>
    </location>
</feature>
<feature type="strand" evidence="4">
    <location>
        <begin position="68"/>
        <end position="73"/>
    </location>
</feature>
<feature type="helix" evidence="4">
    <location>
        <begin position="76"/>
        <end position="83"/>
    </location>
</feature>
<feature type="turn" evidence="4">
    <location>
        <begin position="86"/>
        <end position="88"/>
    </location>
</feature>
<feature type="strand" evidence="4">
    <location>
        <begin position="95"/>
        <end position="99"/>
    </location>
</feature>
<feature type="strand" evidence="4">
    <location>
        <begin position="105"/>
        <end position="109"/>
    </location>
</feature>
<feature type="helix" evidence="4">
    <location>
        <begin position="120"/>
        <end position="122"/>
    </location>
</feature>
<feature type="helix" evidence="4">
    <location>
        <begin position="127"/>
        <end position="136"/>
    </location>
</feature>
<feature type="helix" evidence="4">
    <location>
        <begin position="141"/>
        <end position="162"/>
    </location>
</feature>
<feature type="strand" evidence="4">
    <location>
        <begin position="167"/>
        <end position="169"/>
    </location>
</feature>
<feature type="helix" evidence="4">
    <location>
        <begin position="170"/>
        <end position="173"/>
    </location>
</feature>
<feature type="turn" evidence="4">
    <location>
        <begin position="174"/>
        <end position="177"/>
    </location>
</feature>
<feature type="helix" evidence="4">
    <location>
        <begin position="178"/>
        <end position="187"/>
    </location>
</feature>
<feature type="helix" evidence="4">
    <location>
        <begin position="194"/>
        <end position="201"/>
    </location>
</feature>
<feature type="helix" evidence="4">
    <location>
        <begin position="203"/>
        <end position="209"/>
    </location>
</feature>
<feature type="helix" evidence="4">
    <location>
        <begin position="214"/>
        <end position="240"/>
    </location>
</feature>
<feature type="helix" evidence="4">
    <location>
        <begin position="246"/>
        <end position="255"/>
    </location>
</feature>
<feature type="helix" evidence="4">
    <location>
        <begin position="261"/>
        <end position="275"/>
    </location>
</feature>
<feature type="helix" evidence="4">
    <location>
        <begin position="277"/>
        <end position="292"/>
    </location>
</feature>
<feature type="helix" evidence="4">
    <location>
        <begin position="294"/>
        <end position="302"/>
    </location>
</feature>
<feature type="helix" evidence="4">
    <location>
        <begin position="304"/>
        <end position="306"/>
    </location>
</feature>
<feature type="helix" evidence="4">
    <location>
        <begin position="307"/>
        <end position="317"/>
    </location>
</feature>
<feature type="strand" evidence="4">
    <location>
        <begin position="320"/>
        <end position="322"/>
    </location>
</feature>
<feature type="strand" evidence="4">
    <location>
        <begin position="324"/>
        <end position="328"/>
    </location>
</feature>
<feature type="strand" evidence="4">
    <location>
        <begin position="330"/>
        <end position="334"/>
    </location>
</feature>
<feature type="strand" evidence="4">
    <location>
        <begin position="337"/>
        <end position="339"/>
    </location>
</feature>
<feature type="strand" evidence="4">
    <location>
        <begin position="344"/>
        <end position="347"/>
    </location>
</feature>
<feature type="helix" evidence="4">
    <location>
        <begin position="349"/>
        <end position="352"/>
    </location>
</feature>
<feature type="turn" evidence="4">
    <location>
        <begin position="356"/>
        <end position="358"/>
    </location>
</feature>
<feature type="helix" evidence="4">
    <location>
        <begin position="381"/>
        <end position="383"/>
    </location>
</feature>
<feature type="helix" evidence="4">
    <location>
        <begin position="388"/>
        <end position="404"/>
    </location>
</feature>
<feature type="strand" evidence="4">
    <location>
        <begin position="407"/>
        <end position="414"/>
    </location>
</feature>
<feature type="strand" evidence="4">
    <location>
        <begin position="421"/>
        <end position="423"/>
    </location>
</feature>
<feature type="strand" evidence="4">
    <location>
        <begin position="429"/>
        <end position="434"/>
    </location>
</feature>
<comment type="cofactor">
    <cofactor evidence="1">
        <name>heme</name>
        <dbReference type="ChEBI" id="CHEBI:30413"/>
    </cofactor>
</comment>
<comment type="activity regulation">
    <text evidence="2">Inhibited by azole drugs.</text>
</comment>
<comment type="subunit">
    <text evidence="2">Monomer.</text>
</comment>
<comment type="disruption phenotype">
    <text evidence="2">Cells are more sensitive to azole inhibition.</text>
</comment>
<comment type="similarity">
    <text evidence="3">Belongs to the cytochrome P450 family.</text>
</comment>
<sequence>MRRSPKGSPGAVLDLQRRVDQAVSADHAELMTIAKDANTFFGAESVQDPYPLYERMRAAGSVHRIANSDFYAVCGWDAVNEAIGRPEDFSSNLTATMTYTAEGTAKPFEMDPLGGPTHVLATADDPAHAVHRKLVLRHLAAKRIRVMEQFTVQAADRLWVDGMQDGCIEWMGAMANRLPMMVVAELIGLPDPDIAQLVKWGYAATQLLEGLVENDQLVAAGVALMELSGYIFEQFDRAAADPRDNLLGELATACASGELDTLTAQVMMVTLFAAGGESTAALLGSAVWILATRPDIQQQVRANPELLGAFIEETLRYEPPFRGHYRHVRNATTLDGTELPADSHLLLLWGAANRDPAQFEAPGEFRLDRAGGKGHISFGKGAHFCVGAALARLEARIVLRLLLDRTSVIEAADVGGWLPSILVRRIERLELAVQ</sequence>
<protein>
    <recommendedName>
        <fullName>Cytochrome P450 144</fullName>
        <ecNumber>1.14.-.-</ecNumber>
    </recommendedName>
</protein>
<dbReference type="EC" id="1.14.-.-"/>
<dbReference type="EMBL" id="AL123456">
    <property type="protein sequence ID" value="CCP44544.1"/>
    <property type="molecule type" value="Genomic_DNA"/>
</dbReference>
<dbReference type="PIR" id="B70511">
    <property type="entry name" value="B70511"/>
</dbReference>
<dbReference type="RefSeq" id="NP_216293.1">
    <property type="nucleotide sequence ID" value="NC_000962.3"/>
</dbReference>
<dbReference type="RefSeq" id="WP_003408772.1">
    <property type="nucleotide sequence ID" value="NC_000962.3"/>
</dbReference>
<dbReference type="PDB" id="5HDI">
    <property type="method" value="X-ray"/>
    <property type="resolution" value="1.54 A"/>
    <property type="chains" value="A/B=31-434"/>
</dbReference>
<dbReference type="PDBsum" id="5HDI"/>
<dbReference type="SMR" id="P9WPL1"/>
<dbReference type="FunCoup" id="P9WPL1">
    <property type="interactions" value="11"/>
</dbReference>
<dbReference type="STRING" id="83332.Rv1777"/>
<dbReference type="PaxDb" id="83332-Rv1777"/>
<dbReference type="DNASU" id="885839"/>
<dbReference type="GeneID" id="885839"/>
<dbReference type="KEGG" id="mtu:Rv1777"/>
<dbReference type="KEGG" id="mtv:RVBD_1777"/>
<dbReference type="PATRIC" id="fig|83332.111.peg.1981"/>
<dbReference type="TubercuList" id="Rv1777"/>
<dbReference type="eggNOG" id="COG2124">
    <property type="taxonomic scope" value="Bacteria"/>
</dbReference>
<dbReference type="InParanoid" id="P9WPL1"/>
<dbReference type="OrthoDB" id="502624at2"/>
<dbReference type="PhylomeDB" id="P9WPL1"/>
<dbReference type="Proteomes" id="UP000001584">
    <property type="component" value="Chromosome"/>
</dbReference>
<dbReference type="GO" id="GO:0009274">
    <property type="term" value="C:peptidoglycan-based cell wall"/>
    <property type="evidence" value="ECO:0007005"/>
    <property type="project" value="MTBBASE"/>
</dbReference>
<dbReference type="GO" id="GO:0036199">
    <property type="term" value="F:cholest-4-en-3-one 26-monooxygenase activity"/>
    <property type="evidence" value="ECO:0000318"/>
    <property type="project" value="GO_Central"/>
</dbReference>
<dbReference type="GO" id="GO:0020037">
    <property type="term" value="F:heme binding"/>
    <property type="evidence" value="ECO:0000318"/>
    <property type="project" value="GO_Central"/>
</dbReference>
<dbReference type="GO" id="GO:0005506">
    <property type="term" value="F:iron ion binding"/>
    <property type="evidence" value="ECO:0007669"/>
    <property type="project" value="InterPro"/>
</dbReference>
<dbReference type="GO" id="GO:0008395">
    <property type="term" value="F:steroid hydroxylase activity"/>
    <property type="evidence" value="ECO:0000318"/>
    <property type="project" value="GO_Central"/>
</dbReference>
<dbReference type="GO" id="GO:0006707">
    <property type="term" value="P:cholesterol catabolic process"/>
    <property type="evidence" value="ECO:0000318"/>
    <property type="project" value="GO_Central"/>
</dbReference>
<dbReference type="FunFam" id="1.10.630.10:FF:000196">
    <property type="entry name" value="Cytochrome P450 144"/>
    <property type="match status" value="1"/>
</dbReference>
<dbReference type="Gene3D" id="1.10.630.10">
    <property type="entry name" value="Cytochrome P450"/>
    <property type="match status" value="1"/>
</dbReference>
<dbReference type="InterPro" id="IPR001128">
    <property type="entry name" value="Cyt_P450"/>
</dbReference>
<dbReference type="InterPro" id="IPR002397">
    <property type="entry name" value="Cyt_P450_B"/>
</dbReference>
<dbReference type="InterPro" id="IPR017972">
    <property type="entry name" value="Cyt_P450_CS"/>
</dbReference>
<dbReference type="InterPro" id="IPR036396">
    <property type="entry name" value="Cyt_P450_sf"/>
</dbReference>
<dbReference type="PANTHER" id="PTHR46696:SF4">
    <property type="entry name" value="BIOTIN BIOSYNTHESIS CYTOCHROME P450"/>
    <property type="match status" value="1"/>
</dbReference>
<dbReference type="PANTHER" id="PTHR46696">
    <property type="entry name" value="P450, PUTATIVE (EUROFUNG)-RELATED"/>
    <property type="match status" value="1"/>
</dbReference>
<dbReference type="Pfam" id="PF00067">
    <property type="entry name" value="p450"/>
    <property type="match status" value="1"/>
</dbReference>
<dbReference type="PRINTS" id="PR00359">
    <property type="entry name" value="BP450"/>
</dbReference>
<dbReference type="PRINTS" id="PR00385">
    <property type="entry name" value="P450"/>
</dbReference>
<dbReference type="SUPFAM" id="SSF48264">
    <property type="entry name" value="Cytochrome P450"/>
    <property type="match status" value="1"/>
</dbReference>
<dbReference type="PROSITE" id="PS00086">
    <property type="entry name" value="CYTOCHROME_P450"/>
    <property type="match status" value="1"/>
</dbReference>
<organism>
    <name type="scientific">Mycobacterium tuberculosis (strain ATCC 25618 / H37Rv)</name>
    <dbReference type="NCBI Taxonomy" id="83332"/>
    <lineage>
        <taxon>Bacteria</taxon>
        <taxon>Bacillati</taxon>
        <taxon>Actinomycetota</taxon>
        <taxon>Actinomycetes</taxon>
        <taxon>Mycobacteriales</taxon>
        <taxon>Mycobacteriaceae</taxon>
        <taxon>Mycobacterium</taxon>
        <taxon>Mycobacterium tuberculosis complex</taxon>
    </lineage>
</organism>
<reference key="1">
    <citation type="journal article" date="1998" name="Nature">
        <title>Deciphering the biology of Mycobacterium tuberculosis from the complete genome sequence.</title>
        <authorList>
            <person name="Cole S.T."/>
            <person name="Brosch R."/>
            <person name="Parkhill J."/>
            <person name="Garnier T."/>
            <person name="Churcher C.M."/>
            <person name="Harris D.E."/>
            <person name="Gordon S.V."/>
            <person name="Eiglmeier K."/>
            <person name="Gas S."/>
            <person name="Barry C.E. III"/>
            <person name="Tekaia F."/>
            <person name="Badcock K."/>
            <person name="Basham D."/>
            <person name="Brown D."/>
            <person name="Chillingworth T."/>
            <person name="Connor R."/>
            <person name="Davies R.M."/>
            <person name="Devlin K."/>
            <person name="Feltwell T."/>
            <person name="Gentles S."/>
            <person name="Hamlin N."/>
            <person name="Holroyd S."/>
            <person name="Hornsby T."/>
            <person name="Jagels K."/>
            <person name="Krogh A."/>
            <person name="McLean J."/>
            <person name="Moule S."/>
            <person name="Murphy L.D."/>
            <person name="Oliver S."/>
            <person name="Osborne J."/>
            <person name="Quail M.A."/>
            <person name="Rajandream M.A."/>
            <person name="Rogers J."/>
            <person name="Rutter S."/>
            <person name="Seeger K."/>
            <person name="Skelton S."/>
            <person name="Squares S."/>
            <person name="Squares R."/>
            <person name="Sulston J.E."/>
            <person name="Taylor K."/>
            <person name="Whitehead S."/>
            <person name="Barrell B.G."/>
        </authorList>
    </citation>
    <scope>NUCLEOTIDE SEQUENCE [LARGE SCALE GENOMIC DNA]</scope>
    <source>
        <strain>ATCC 25618 / H37Rv</strain>
    </source>
</reference>
<reference key="2">
    <citation type="journal article" date="2011" name="Biochim. Biophys. Acta">
        <title>Expression and characterization of Mycobacterium tuberculosis CYP144: common themes and lessons learned in the M. tuberculosis P450 enzyme family.</title>
        <authorList>
            <person name="Driscoll M.D."/>
            <person name="McLean K.J."/>
            <person name="Cheesman M.R."/>
            <person name="Jowitt T.A."/>
            <person name="Howard M."/>
            <person name="Carroll P."/>
            <person name="Parish T."/>
            <person name="Munro A.W."/>
        </authorList>
    </citation>
    <scope>DISRUPTION PHENOTYPE</scope>
    <scope>ACTIVITY REGULATION</scope>
    <scope>SUBUNIT</scope>
</reference>